<gene>
    <name evidence="1" type="primary">rph</name>
    <name type="ordered locus">NMA1702</name>
</gene>
<comment type="function">
    <text evidence="1">Phosphorolytic 3'-5' exoribonuclease that plays an important role in tRNA 3'-end maturation. Removes nucleotide residues following the 3'-CCA terminus of tRNAs; can also add nucleotides to the ends of RNA molecules by using nucleoside diphosphates as substrates, but this may not be physiologically important. Probably plays a role in initiation of 16S rRNA degradation (leading to ribosome degradation) during starvation.</text>
</comment>
<comment type="catalytic activity">
    <reaction evidence="1">
        <text>tRNA(n+1) + phosphate = tRNA(n) + a ribonucleoside 5'-diphosphate</text>
        <dbReference type="Rhea" id="RHEA:10628"/>
        <dbReference type="Rhea" id="RHEA-COMP:17343"/>
        <dbReference type="Rhea" id="RHEA-COMP:17344"/>
        <dbReference type="ChEBI" id="CHEBI:43474"/>
        <dbReference type="ChEBI" id="CHEBI:57930"/>
        <dbReference type="ChEBI" id="CHEBI:173114"/>
        <dbReference type="EC" id="2.7.7.56"/>
    </reaction>
</comment>
<comment type="subunit">
    <text evidence="1">Homohexameric ring arranged as a trimer of dimers.</text>
</comment>
<comment type="similarity">
    <text evidence="1">Belongs to the RNase PH family.</text>
</comment>
<reference key="1">
    <citation type="journal article" date="2000" name="Nature">
        <title>Complete DNA sequence of a serogroup A strain of Neisseria meningitidis Z2491.</title>
        <authorList>
            <person name="Parkhill J."/>
            <person name="Achtman M."/>
            <person name="James K.D."/>
            <person name="Bentley S.D."/>
            <person name="Churcher C.M."/>
            <person name="Klee S.R."/>
            <person name="Morelli G."/>
            <person name="Basham D."/>
            <person name="Brown D."/>
            <person name="Chillingworth T."/>
            <person name="Davies R.M."/>
            <person name="Davis P."/>
            <person name="Devlin K."/>
            <person name="Feltwell T."/>
            <person name="Hamlin N."/>
            <person name="Holroyd S."/>
            <person name="Jagels K."/>
            <person name="Leather S."/>
            <person name="Moule S."/>
            <person name="Mungall K.L."/>
            <person name="Quail M.A."/>
            <person name="Rajandream M.A."/>
            <person name="Rutherford K.M."/>
            <person name="Simmonds M."/>
            <person name="Skelton J."/>
            <person name="Whitehead S."/>
            <person name="Spratt B.G."/>
            <person name="Barrell B.G."/>
        </authorList>
    </citation>
    <scope>NUCLEOTIDE SEQUENCE [LARGE SCALE GENOMIC DNA]</scope>
    <source>
        <strain>DSM 15465 / Z2491</strain>
    </source>
</reference>
<accession>Q9JTN2</accession>
<accession>A1ISR9</accession>
<sequence length="242" mass="25740">MPDYIRISRAADSLRDIKITPHFLPHTDGSCLIECGNTKVICTASIDENVPPFLRGKNQGWVTAEYGMLPASTASRMRREASAGKQSGRTQEIQRLIGRSLRAVVDMEKLGERQILIDCDVIQADGGTRTASITGAFVALQIAVGKLVSDGILSENPIREAVAAVSVGVVNGVPLLDLDYPEDSGCDSDVNIVMTASGKIIEIQGTAEDAPFSLDELGKLVALAQKGIGELLQHQQNALSAA</sequence>
<evidence type="ECO:0000255" key="1">
    <source>
        <dbReference type="HAMAP-Rule" id="MF_00564"/>
    </source>
</evidence>
<feature type="chain" id="PRO_0000139913" description="Ribonuclease PH">
    <location>
        <begin position="1"/>
        <end position="242"/>
    </location>
</feature>
<feature type="binding site" evidence="1">
    <location>
        <position position="89"/>
    </location>
    <ligand>
        <name>phosphate</name>
        <dbReference type="ChEBI" id="CHEBI:43474"/>
        <note>substrate</note>
    </ligand>
</feature>
<feature type="binding site" evidence="1">
    <location>
        <begin position="127"/>
        <end position="129"/>
    </location>
    <ligand>
        <name>phosphate</name>
        <dbReference type="ChEBI" id="CHEBI:43474"/>
        <note>substrate</note>
    </ligand>
</feature>
<name>RNPH_NEIMA</name>
<dbReference type="EC" id="2.7.7.56" evidence="1"/>
<dbReference type="EMBL" id="AL157959">
    <property type="protein sequence ID" value="CAM08831.1"/>
    <property type="molecule type" value="Genomic_DNA"/>
</dbReference>
<dbReference type="PIR" id="A81866">
    <property type="entry name" value="A81866"/>
</dbReference>
<dbReference type="RefSeq" id="WP_002212901.1">
    <property type="nucleotide sequence ID" value="NC_003116.1"/>
</dbReference>
<dbReference type="SMR" id="Q9JTN2"/>
<dbReference type="EnsemblBacteria" id="CAM08831">
    <property type="protein sequence ID" value="CAM08831"/>
    <property type="gene ID" value="NMA1702"/>
</dbReference>
<dbReference type="GeneID" id="93387879"/>
<dbReference type="KEGG" id="nma:NMA1702"/>
<dbReference type="HOGENOM" id="CLU_050858_0_0_4"/>
<dbReference type="Proteomes" id="UP000000626">
    <property type="component" value="Chromosome"/>
</dbReference>
<dbReference type="GO" id="GO:0000175">
    <property type="term" value="F:3'-5'-RNA exonuclease activity"/>
    <property type="evidence" value="ECO:0007669"/>
    <property type="project" value="UniProtKB-UniRule"/>
</dbReference>
<dbReference type="GO" id="GO:0000049">
    <property type="term" value="F:tRNA binding"/>
    <property type="evidence" value="ECO:0007669"/>
    <property type="project" value="UniProtKB-UniRule"/>
</dbReference>
<dbReference type="GO" id="GO:0009022">
    <property type="term" value="F:tRNA nucleotidyltransferase activity"/>
    <property type="evidence" value="ECO:0007669"/>
    <property type="project" value="UniProtKB-UniRule"/>
</dbReference>
<dbReference type="GO" id="GO:0016075">
    <property type="term" value="P:rRNA catabolic process"/>
    <property type="evidence" value="ECO:0007669"/>
    <property type="project" value="UniProtKB-UniRule"/>
</dbReference>
<dbReference type="GO" id="GO:0006364">
    <property type="term" value="P:rRNA processing"/>
    <property type="evidence" value="ECO:0007669"/>
    <property type="project" value="UniProtKB-KW"/>
</dbReference>
<dbReference type="GO" id="GO:0008033">
    <property type="term" value="P:tRNA processing"/>
    <property type="evidence" value="ECO:0007669"/>
    <property type="project" value="UniProtKB-UniRule"/>
</dbReference>
<dbReference type="CDD" id="cd11362">
    <property type="entry name" value="RNase_PH_bact"/>
    <property type="match status" value="1"/>
</dbReference>
<dbReference type="FunFam" id="3.30.230.70:FF:000003">
    <property type="entry name" value="Ribonuclease PH"/>
    <property type="match status" value="1"/>
</dbReference>
<dbReference type="Gene3D" id="3.30.230.70">
    <property type="entry name" value="GHMP Kinase, N-terminal domain"/>
    <property type="match status" value="1"/>
</dbReference>
<dbReference type="HAMAP" id="MF_00564">
    <property type="entry name" value="RNase_PH"/>
    <property type="match status" value="1"/>
</dbReference>
<dbReference type="InterPro" id="IPR001247">
    <property type="entry name" value="ExoRNase_PH_dom1"/>
</dbReference>
<dbReference type="InterPro" id="IPR015847">
    <property type="entry name" value="ExoRNase_PH_dom2"/>
</dbReference>
<dbReference type="InterPro" id="IPR036345">
    <property type="entry name" value="ExoRNase_PH_dom2_sf"/>
</dbReference>
<dbReference type="InterPro" id="IPR027408">
    <property type="entry name" value="PNPase/RNase_PH_dom_sf"/>
</dbReference>
<dbReference type="InterPro" id="IPR020568">
    <property type="entry name" value="Ribosomal_Su5_D2-typ_SF"/>
</dbReference>
<dbReference type="InterPro" id="IPR050080">
    <property type="entry name" value="RNase_PH"/>
</dbReference>
<dbReference type="InterPro" id="IPR002381">
    <property type="entry name" value="RNase_PH_bac-type"/>
</dbReference>
<dbReference type="InterPro" id="IPR018336">
    <property type="entry name" value="RNase_PH_CS"/>
</dbReference>
<dbReference type="NCBIfam" id="TIGR01966">
    <property type="entry name" value="RNasePH"/>
    <property type="match status" value="1"/>
</dbReference>
<dbReference type="PANTHER" id="PTHR11953">
    <property type="entry name" value="EXOSOME COMPLEX COMPONENT"/>
    <property type="match status" value="1"/>
</dbReference>
<dbReference type="PANTHER" id="PTHR11953:SF0">
    <property type="entry name" value="EXOSOME COMPLEX COMPONENT RRP41"/>
    <property type="match status" value="1"/>
</dbReference>
<dbReference type="Pfam" id="PF01138">
    <property type="entry name" value="RNase_PH"/>
    <property type="match status" value="1"/>
</dbReference>
<dbReference type="Pfam" id="PF03725">
    <property type="entry name" value="RNase_PH_C"/>
    <property type="match status" value="1"/>
</dbReference>
<dbReference type="SUPFAM" id="SSF55666">
    <property type="entry name" value="Ribonuclease PH domain 2-like"/>
    <property type="match status" value="1"/>
</dbReference>
<dbReference type="SUPFAM" id="SSF54211">
    <property type="entry name" value="Ribosomal protein S5 domain 2-like"/>
    <property type="match status" value="1"/>
</dbReference>
<dbReference type="PROSITE" id="PS01277">
    <property type="entry name" value="RIBONUCLEASE_PH"/>
    <property type="match status" value="1"/>
</dbReference>
<keyword id="KW-0548">Nucleotidyltransferase</keyword>
<keyword id="KW-0694">RNA-binding</keyword>
<keyword id="KW-0698">rRNA processing</keyword>
<keyword id="KW-0808">Transferase</keyword>
<keyword id="KW-0819">tRNA processing</keyword>
<keyword id="KW-0820">tRNA-binding</keyword>
<organism>
    <name type="scientific">Neisseria meningitidis serogroup A / serotype 4A (strain DSM 15465 / Z2491)</name>
    <dbReference type="NCBI Taxonomy" id="122587"/>
    <lineage>
        <taxon>Bacteria</taxon>
        <taxon>Pseudomonadati</taxon>
        <taxon>Pseudomonadota</taxon>
        <taxon>Betaproteobacteria</taxon>
        <taxon>Neisseriales</taxon>
        <taxon>Neisseriaceae</taxon>
        <taxon>Neisseria</taxon>
    </lineage>
</organism>
<proteinExistence type="inferred from homology"/>
<protein>
    <recommendedName>
        <fullName evidence="1">Ribonuclease PH</fullName>
        <shortName evidence="1">RNase PH</shortName>
        <ecNumber evidence="1">2.7.7.56</ecNumber>
    </recommendedName>
    <alternativeName>
        <fullName evidence="1">tRNA nucleotidyltransferase</fullName>
    </alternativeName>
</protein>